<evidence type="ECO:0000250" key="1">
    <source>
        <dbReference type="UniProtKB" id="I2DBY1"/>
    </source>
</evidence>
<evidence type="ECO:0000255" key="2"/>
<evidence type="ECO:0000255" key="3">
    <source>
        <dbReference type="PROSITE-ProRule" id="PRU00498"/>
    </source>
</evidence>
<evidence type="ECO:0000269" key="4">
    <source>
    </source>
</evidence>
<evidence type="ECO:0000303" key="5">
    <source>
    </source>
</evidence>
<evidence type="ECO:0000305" key="6"/>
<evidence type="ECO:0000305" key="7">
    <source>
    </source>
</evidence>
<evidence type="ECO:0000312" key="8">
    <source>
        <dbReference type="EMBL" id="AFJ79725.1"/>
    </source>
</evidence>
<organism evidence="8">
    <name type="scientific">Mycena epipterygia</name>
    <name type="common">Yellow-stemmed mycena</name>
    <dbReference type="NCBI Taxonomy" id="230806"/>
    <lineage>
        <taxon>Eukaryota</taxon>
        <taxon>Fungi</taxon>
        <taxon>Dikarya</taxon>
        <taxon>Basidiomycota</taxon>
        <taxon>Agaricomycotina</taxon>
        <taxon>Agaricomycetes</taxon>
        <taxon>Agaricomycetidae</taxon>
        <taxon>Agaricales</taxon>
        <taxon>Marasmiineae</taxon>
        <taxon>Mycenaceae</taxon>
        <taxon>Mycena</taxon>
    </lineage>
</organism>
<proteinExistence type="evidence at protein level"/>
<dbReference type="EC" id="1.11.1.19" evidence="4"/>
<dbReference type="EC" id="1.11.1.7" evidence="4"/>
<dbReference type="EMBL" id="JQ650252">
    <property type="protein sequence ID" value="AFJ79725.1"/>
    <property type="molecule type" value="mRNA"/>
</dbReference>
<dbReference type="SMR" id="I2DBY3"/>
<dbReference type="GlyCosmos" id="I2DBY3">
    <property type="glycosylation" value="4 sites, No reported glycans"/>
</dbReference>
<dbReference type="GO" id="GO:0005829">
    <property type="term" value="C:cytosol"/>
    <property type="evidence" value="ECO:0007669"/>
    <property type="project" value="TreeGrafter"/>
</dbReference>
<dbReference type="GO" id="GO:0005576">
    <property type="term" value="C:extracellular region"/>
    <property type="evidence" value="ECO:0007669"/>
    <property type="project" value="UniProtKB-SubCell"/>
</dbReference>
<dbReference type="GO" id="GO:0020037">
    <property type="term" value="F:heme binding"/>
    <property type="evidence" value="ECO:0007669"/>
    <property type="project" value="InterPro"/>
</dbReference>
<dbReference type="GO" id="GO:0140825">
    <property type="term" value="F:lactoperoxidase activity"/>
    <property type="evidence" value="ECO:0007669"/>
    <property type="project" value="UniProtKB-EC"/>
</dbReference>
<dbReference type="GO" id="GO:0046872">
    <property type="term" value="F:metal ion binding"/>
    <property type="evidence" value="ECO:0007669"/>
    <property type="project" value="UniProtKB-KW"/>
</dbReference>
<dbReference type="GO" id="GO:0004601">
    <property type="term" value="F:peroxidase activity"/>
    <property type="evidence" value="ECO:0000314"/>
    <property type="project" value="UniProtKB"/>
</dbReference>
<dbReference type="InterPro" id="IPR011008">
    <property type="entry name" value="Dimeric_a/b-barrel"/>
</dbReference>
<dbReference type="InterPro" id="IPR049509">
    <property type="entry name" value="DyP_N"/>
</dbReference>
<dbReference type="InterPro" id="IPR048328">
    <property type="entry name" value="Dyp_perox_C"/>
</dbReference>
<dbReference type="InterPro" id="IPR006314">
    <property type="entry name" value="Dyp_peroxidase"/>
</dbReference>
<dbReference type="NCBIfam" id="TIGR01413">
    <property type="entry name" value="Dyp_perox_fam"/>
    <property type="match status" value="1"/>
</dbReference>
<dbReference type="PANTHER" id="PTHR30521:SF4">
    <property type="entry name" value="DEFERROCHELATASE"/>
    <property type="match status" value="1"/>
</dbReference>
<dbReference type="PANTHER" id="PTHR30521">
    <property type="entry name" value="DEFERROCHELATASE/PEROXIDASE"/>
    <property type="match status" value="1"/>
</dbReference>
<dbReference type="Pfam" id="PF21105">
    <property type="entry name" value="DyP_N"/>
    <property type="match status" value="1"/>
</dbReference>
<dbReference type="Pfam" id="PF20628">
    <property type="entry name" value="Dyp_perox_C"/>
    <property type="match status" value="1"/>
</dbReference>
<dbReference type="SUPFAM" id="SSF54909">
    <property type="entry name" value="Dimeric alpha+beta barrel"/>
    <property type="match status" value="1"/>
</dbReference>
<dbReference type="PROSITE" id="PS51404">
    <property type="entry name" value="DYP_PEROXIDASE"/>
    <property type="match status" value="1"/>
</dbReference>
<keyword id="KW-0903">Direct protein sequencing</keyword>
<keyword id="KW-0325">Glycoprotein</keyword>
<keyword id="KW-0349">Heme</keyword>
<keyword id="KW-0408">Iron</keyword>
<keyword id="KW-0479">Metal-binding</keyword>
<keyword id="KW-0560">Oxidoreductase</keyword>
<keyword id="KW-0575">Peroxidase</keyword>
<keyword id="KW-0964">Secreted</keyword>
<keyword id="KW-0732">Signal</keyword>
<sequence>MRKSISTFILLSVLSVGQLVAARPRSTNAPPRRRTPQPRRTTSLFINPPALPDLPTVQAVDKLDDALDIDNIQSDILVGMKKTKELFFFFGVEDAATFKSKLASDILPLITTTTEILSTDTQPITAVNIAFSHTGLVALGVNDDIGDTDFVSGQFSEATTVGDRPTLWDPAFAGTKIHGVFLLASNTTEDINTELANIQSILGSSITEIHRLQGAARPGAEEGHEHFGFLDGISQPAVNGFTDTVLPGQTPVDPGLFLLGESGDPSQDSRPSWAVDGSFLVFRQLQQFVPEFNQFLADHPLDIPGRTAEEGSELLGARMVGRWKSGAPVFLSPTQDDPVLGADKNRNNDFNYLVASDPDPGTENHFNQTACPFGAHIRKVHPRGDLSPSAENPHFIIRSSIPYGPEVTDAEAASSTTSVDRGLAFVSYQSNIFNGFVFLQSIWINNVNFIFGKVDPTIGVDPIIGTLGGGPHNISGLNPLIPVNETVDFQDDPWNDVVIPRDFVVSHGGEYFFSPSLSGISAIAAA</sequence>
<protein>
    <recommendedName>
        <fullName evidence="5">Dye-decolorizing peroxidase</fullName>
        <shortName evidence="5">MepDyP</shortName>
        <ecNumber evidence="4">1.11.1.19</ecNumber>
        <ecNumber evidence="4">1.11.1.7</ecNumber>
    </recommendedName>
</protein>
<feature type="signal peptide" evidence="2">
    <location>
        <begin position="1"/>
        <end position="21"/>
    </location>
</feature>
<feature type="propeptide" id="PRO_0000444022" evidence="7">
    <location>
        <begin position="22"/>
        <end position="63"/>
    </location>
</feature>
<feature type="chain" id="PRO_5003656618" description="Dye-decolorizing peroxidase" evidence="6">
    <location>
        <begin position="64"/>
        <end position="526"/>
    </location>
</feature>
<feature type="active site" description="Proton acceptor" evidence="1">
    <location>
        <position position="231"/>
    </location>
</feature>
<feature type="binding site" description="axial binding residue" evidence="1">
    <location>
        <position position="376"/>
    </location>
    <ligand>
        <name>heme</name>
        <dbReference type="ChEBI" id="CHEBI:30413"/>
    </ligand>
    <ligandPart>
        <name>Fe</name>
        <dbReference type="ChEBI" id="CHEBI:18248"/>
    </ligandPart>
</feature>
<feature type="glycosylation site" description="N-linked (GlcNAc...) asparagine" evidence="3">
    <location>
        <position position="186"/>
    </location>
</feature>
<feature type="glycosylation site" description="N-linked (GlcNAc...) asparagine" evidence="3">
    <location>
        <position position="367"/>
    </location>
</feature>
<feature type="glycosylation site" description="N-linked (GlcNAc...) asparagine" evidence="3">
    <location>
        <position position="473"/>
    </location>
</feature>
<feature type="glycosylation site" description="N-linked (GlcNAc...) asparagine" evidence="3">
    <location>
        <position position="484"/>
    </location>
</feature>
<name>DYP_MYCEP</name>
<comment type="function">
    <text evidence="4">Manganese-independent peroxidase that is able to convert a large number of compounds, but its physiological substrate is not known. In addition to classic peroxidase substrates (e.g. 2,6-dimethoxyphenol), oxidizes dyes such as Reactive Blue 5 and Reactive Black 5.</text>
</comment>
<comment type="catalytic activity">
    <reaction evidence="4">
        <text>Reactive Blue 5 + 2 H2O2 = 2,2'-disulfonyl azobenzene + 3-[(4-amino-6-chloro-1,3,5-triazin-2-yl)amino]benzenesulfonate + phthalate + 2 H2O + 2 H(+)</text>
        <dbReference type="Rhea" id="RHEA:28086"/>
        <dbReference type="ChEBI" id="CHEBI:15377"/>
        <dbReference type="ChEBI" id="CHEBI:15378"/>
        <dbReference type="ChEBI" id="CHEBI:16240"/>
        <dbReference type="ChEBI" id="CHEBI:17563"/>
        <dbReference type="ChEBI" id="CHEBI:63950"/>
        <dbReference type="ChEBI" id="CHEBI:63955"/>
        <dbReference type="ChEBI" id="CHEBI:64278"/>
        <dbReference type="EC" id="1.11.1.19"/>
    </reaction>
</comment>
<comment type="catalytic activity">
    <reaction evidence="4">
        <text>2 a phenolic donor + H2O2 = 2 a phenolic radical donor + 2 H2O</text>
        <dbReference type="Rhea" id="RHEA:56136"/>
        <dbReference type="ChEBI" id="CHEBI:15377"/>
        <dbReference type="ChEBI" id="CHEBI:16240"/>
        <dbReference type="ChEBI" id="CHEBI:139520"/>
        <dbReference type="ChEBI" id="CHEBI:139521"/>
        <dbReference type="EC" id="1.11.1.7"/>
    </reaction>
</comment>
<comment type="cofactor">
    <cofactor evidence="1">
        <name>heme b</name>
        <dbReference type="ChEBI" id="CHEBI:60344"/>
    </cofactor>
    <text evidence="1">Binds 1 heme b (iron(II)-protoporphyrin IX) group non-covalently.</text>
</comment>
<comment type="biophysicochemical properties">
    <absorption>
        <max evidence="4">405 nm</max>
    </absorption>
    <kinetics>
        <KM evidence="4">11 uM for H(2)O(2)</KM>
    </kinetics>
    <phDependence>
        <text evidence="4">Optimum pH is 4 with 2,6-dimethoxyphenol as substrate. Retains 90% of its activity after 4 hours at pH 2.5.</text>
    </phDependence>
    <temperatureDependence>
        <text evidence="4">Thermostable. Retains 50%-90% of its activity after heating for 2 hours at 60 degrees Celsius, while no decrease in activity is observed within the same time at 30 or 40 degrees Celsius.</text>
    </temperatureDependence>
</comment>
<comment type="subcellular location">
    <subcellularLocation>
        <location evidence="7">Secreted</location>
    </subcellularLocation>
</comment>
<comment type="similarity">
    <text evidence="6">Belongs to the DyP-type peroxidase family.</text>
</comment>
<gene>
    <name evidence="8" type="primary">dyp1</name>
</gene>
<reference evidence="8" key="1">
    <citation type="journal article" date="2013" name="Appl. Microbiol. Biotechnol.">
        <title>Substrate oxidation by dye-decolorizing peroxidases (DyPs) from wood- and litter-degrading agaricomycetes compared to other fungal and plant heme-peroxidases.</title>
        <authorList>
            <person name="Liers C."/>
            <person name="Pecyna M.J."/>
            <person name="Kellner H."/>
            <person name="Worrich A."/>
            <person name="Zorn H."/>
            <person name="Steffen K.T."/>
            <person name="Hofrichter M."/>
            <person name="Ullrich R."/>
        </authorList>
    </citation>
    <scope>NUCLEOTIDE SEQUENCE [MRNA]</scope>
    <scope>PROTEIN SEQUENCE OF 64-73; 325-346 AND 384-420</scope>
    <scope>FUNCTION</scope>
    <scope>CATALYTIC ACTIVITY</scope>
    <scope>BIOPHYSICOCHEMICAL PROPERTIES</scope>
    <source>
        <strain evidence="5">K2</strain>
    </source>
</reference>
<accession>I2DBY3</accession>
<accession>P86835</accession>